<gene>
    <name evidence="1" type="primary">cysS</name>
    <name type="ordered locus">Cphy_3324</name>
</gene>
<reference key="1">
    <citation type="submission" date="2007-11" db="EMBL/GenBank/DDBJ databases">
        <title>Complete genome sequence of Clostridium phytofermentans ISDg.</title>
        <authorList>
            <person name="Leschine S.B."/>
            <person name="Warnick T.A."/>
            <person name="Blanchard J.L."/>
            <person name="Schnell D.J."/>
            <person name="Petit E.L."/>
            <person name="LaTouf W.G."/>
            <person name="Copeland A."/>
            <person name="Lucas S."/>
            <person name="Lapidus A."/>
            <person name="Barry K."/>
            <person name="Glavina del Rio T."/>
            <person name="Dalin E."/>
            <person name="Tice H."/>
            <person name="Pitluck S."/>
            <person name="Kiss H."/>
            <person name="Brettin T."/>
            <person name="Bruce D."/>
            <person name="Detter J.C."/>
            <person name="Han C."/>
            <person name="Kuske C."/>
            <person name="Schmutz J."/>
            <person name="Larimer F."/>
            <person name="Land M."/>
            <person name="Hauser L."/>
            <person name="Kyrpides N."/>
            <person name="Kim E.A."/>
            <person name="Richardson P."/>
        </authorList>
    </citation>
    <scope>NUCLEOTIDE SEQUENCE [LARGE SCALE GENOMIC DNA]</scope>
    <source>
        <strain>ATCC 700394 / DSM 18823 / ISDg</strain>
    </source>
</reference>
<feature type="chain" id="PRO_0000332808" description="Cysteine--tRNA ligase">
    <location>
        <begin position="1"/>
        <end position="470"/>
    </location>
</feature>
<feature type="short sequence motif" description="'HIGH' region">
    <location>
        <begin position="29"/>
        <end position="39"/>
    </location>
</feature>
<feature type="short sequence motif" description="'KMSKS' region">
    <location>
        <begin position="264"/>
        <end position="268"/>
    </location>
</feature>
<feature type="binding site" evidence="1">
    <location>
        <position position="27"/>
    </location>
    <ligand>
        <name>Zn(2+)</name>
        <dbReference type="ChEBI" id="CHEBI:29105"/>
    </ligand>
</feature>
<feature type="binding site" evidence="1">
    <location>
        <position position="207"/>
    </location>
    <ligand>
        <name>Zn(2+)</name>
        <dbReference type="ChEBI" id="CHEBI:29105"/>
    </ligand>
</feature>
<feature type="binding site" evidence="1">
    <location>
        <position position="232"/>
    </location>
    <ligand>
        <name>Zn(2+)</name>
        <dbReference type="ChEBI" id="CHEBI:29105"/>
    </ligand>
</feature>
<feature type="binding site" evidence="1">
    <location>
        <position position="236"/>
    </location>
    <ligand>
        <name>Zn(2+)</name>
        <dbReference type="ChEBI" id="CHEBI:29105"/>
    </ligand>
</feature>
<feature type="binding site" evidence="1">
    <location>
        <position position="267"/>
    </location>
    <ligand>
        <name>ATP</name>
        <dbReference type="ChEBI" id="CHEBI:30616"/>
    </ligand>
</feature>
<accession>A9KSM5</accession>
<evidence type="ECO:0000255" key="1">
    <source>
        <dbReference type="HAMAP-Rule" id="MF_00041"/>
    </source>
</evidence>
<name>SYC_LACP7</name>
<sequence length="470" mass="53795">MKIYNTLTKAKEEFIPLQEGKVSMYVCGPTVYNYIHIGNARPVVVFDTVRRYLEYKGYDVNFVSNFTDVDDKIIKKANEEGVSAHEISERYIKEYLKDTEALNVLPVTTRPKATEEIDGMIDMIEELIEKGHAYEKNGTVYFKTRSFKQYGKLSKKNIDDLEAGARIAVADEKDDPMDFVLWKPKKVGEPAWSAPWCDGRPGWHIECSVMSKKYLGDQIDIHAGGEDLIFPHHENEIAQTECCTGKEFAKYWMHNGFLNVDNKKMSKSEGNFFTVREIFAEYAPAVLRFFLLSVNYRSPINFSRDIIESSKNGLERIQTAVEQLHFLAKVKAEKGELSTELTESESTLLKEFDALIKKFEDAMDDDFNTADAISSIFEMVKLSNTYVTVESSVEMIQKVLSNITTFCDILGLETEKKAEILDEEIEQLIADRQSARKAKDFAKSDEIRNLLLEKGIILEDTREGVKWKRA</sequence>
<proteinExistence type="inferred from homology"/>
<comment type="catalytic activity">
    <reaction evidence="1">
        <text>tRNA(Cys) + L-cysteine + ATP = L-cysteinyl-tRNA(Cys) + AMP + diphosphate</text>
        <dbReference type="Rhea" id="RHEA:17773"/>
        <dbReference type="Rhea" id="RHEA-COMP:9661"/>
        <dbReference type="Rhea" id="RHEA-COMP:9679"/>
        <dbReference type="ChEBI" id="CHEBI:30616"/>
        <dbReference type="ChEBI" id="CHEBI:33019"/>
        <dbReference type="ChEBI" id="CHEBI:35235"/>
        <dbReference type="ChEBI" id="CHEBI:78442"/>
        <dbReference type="ChEBI" id="CHEBI:78517"/>
        <dbReference type="ChEBI" id="CHEBI:456215"/>
        <dbReference type="EC" id="6.1.1.16"/>
    </reaction>
</comment>
<comment type="cofactor">
    <cofactor evidence="1">
        <name>Zn(2+)</name>
        <dbReference type="ChEBI" id="CHEBI:29105"/>
    </cofactor>
    <text evidence="1">Binds 1 zinc ion per subunit.</text>
</comment>
<comment type="subunit">
    <text evidence="1">Monomer.</text>
</comment>
<comment type="subcellular location">
    <subcellularLocation>
        <location evidence="1">Cytoplasm</location>
    </subcellularLocation>
</comment>
<comment type="similarity">
    <text evidence="1">Belongs to the class-I aminoacyl-tRNA synthetase family.</text>
</comment>
<dbReference type="EC" id="6.1.1.16" evidence="1"/>
<dbReference type="EMBL" id="CP000885">
    <property type="protein sequence ID" value="ABX43677.1"/>
    <property type="molecule type" value="Genomic_DNA"/>
</dbReference>
<dbReference type="RefSeq" id="WP_012201326.1">
    <property type="nucleotide sequence ID" value="NC_010001.1"/>
</dbReference>
<dbReference type="SMR" id="A9KSM5"/>
<dbReference type="STRING" id="357809.Cphy_3324"/>
<dbReference type="KEGG" id="cpy:Cphy_3324"/>
<dbReference type="eggNOG" id="COG0215">
    <property type="taxonomic scope" value="Bacteria"/>
</dbReference>
<dbReference type="HOGENOM" id="CLU_013528_0_1_9"/>
<dbReference type="OrthoDB" id="9815130at2"/>
<dbReference type="Proteomes" id="UP000000370">
    <property type="component" value="Chromosome"/>
</dbReference>
<dbReference type="GO" id="GO:0005829">
    <property type="term" value="C:cytosol"/>
    <property type="evidence" value="ECO:0007669"/>
    <property type="project" value="TreeGrafter"/>
</dbReference>
<dbReference type="GO" id="GO:0005524">
    <property type="term" value="F:ATP binding"/>
    <property type="evidence" value="ECO:0007669"/>
    <property type="project" value="UniProtKB-UniRule"/>
</dbReference>
<dbReference type="GO" id="GO:0004817">
    <property type="term" value="F:cysteine-tRNA ligase activity"/>
    <property type="evidence" value="ECO:0007669"/>
    <property type="project" value="UniProtKB-UniRule"/>
</dbReference>
<dbReference type="GO" id="GO:0008270">
    <property type="term" value="F:zinc ion binding"/>
    <property type="evidence" value="ECO:0007669"/>
    <property type="project" value="UniProtKB-UniRule"/>
</dbReference>
<dbReference type="GO" id="GO:0006423">
    <property type="term" value="P:cysteinyl-tRNA aminoacylation"/>
    <property type="evidence" value="ECO:0007669"/>
    <property type="project" value="UniProtKB-UniRule"/>
</dbReference>
<dbReference type="CDD" id="cd00672">
    <property type="entry name" value="CysRS_core"/>
    <property type="match status" value="1"/>
</dbReference>
<dbReference type="FunFam" id="3.40.50.620:FF:000009">
    <property type="entry name" value="Cysteine--tRNA ligase"/>
    <property type="match status" value="1"/>
</dbReference>
<dbReference type="Gene3D" id="1.20.120.1910">
    <property type="entry name" value="Cysteine-tRNA ligase, C-terminal anti-codon recognition domain"/>
    <property type="match status" value="1"/>
</dbReference>
<dbReference type="Gene3D" id="3.40.50.620">
    <property type="entry name" value="HUPs"/>
    <property type="match status" value="1"/>
</dbReference>
<dbReference type="HAMAP" id="MF_00041">
    <property type="entry name" value="Cys_tRNA_synth"/>
    <property type="match status" value="1"/>
</dbReference>
<dbReference type="InterPro" id="IPR015803">
    <property type="entry name" value="Cys-tRNA-ligase"/>
</dbReference>
<dbReference type="InterPro" id="IPR015273">
    <property type="entry name" value="Cys-tRNA-synt_Ia_DALR"/>
</dbReference>
<dbReference type="InterPro" id="IPR024909">
    <property type="entry name" value="Cys-tRNA/MSH_ligase"/>
</dbReference>
<dbReference type="InterPro" id="IPR056411">
    <property type="entry name" value="CysS_C"/>
</dbReference>
<dbReference type="InterPro" id="IPR014729">
    <property type="entry name" value="Rossmann-like_a/b/a_fold"/>
</dbReference>
<dbReference type="InterPro" id="IPR032678">
    <property type="entry name" value="tRNA-synt_1_cat_dom"/>
</dbReference>
<dbReference type="InterPro" id="IPR009080">
    <property type="entry name" value="tRNAsynth_Ia_anticodon-bd"/>
</dbReference>
<dbReference type="NCBIfam" id="TIGR00435">
    <property type="entry name" value="cysS"/>
    <property type="match status" value="1"/>
</dbReference>
<dbReference type="PANTHER" id="PTHR10890:SF3">
    <property type="entry name" value="CYSTEINE--TRNA LIGASE, CYTOPLASMIC"/>
    <property type="match status" value="1"/>
</dbReference>
<dbReference type="PANTHER" id="PTHR10890">
    <property type="entry name" value="CYSTEINYL-TRNA SYNTHETASE"/>
    <property type="match status" value="1"/>
</dbReference>
<dbReference type="Pfam" id="PF23493">
    <property type="entry name" value="CysS_C"/>
    <property type="match status" value="1"/>
</dbReference>
<dbReference type="Pfam" id="PF09190">
    <property type="entry name" value="DALR_2"/>
    <property type="match status" value="1"/>
</dbReference>
<dbReference type="Pfam" id="PF01406">
    <property type="entry name" value="tRNA-synt_1e"/>
    <property type="match status" value="1"/>
</dbReference>
<dbReference type="PRINTS" id="PR00983">
    <property type="entry name" value="TRNASYNTHCYS"/>
</dbReference>
<dbReference type="SMART" id="SM00840">
    <property type="entry name" value="DALR_2"/>
    <property type="match status" value="1"/>
</dbReference>
<dbReference type="SUPFAM" id="SSF47323">
    <property type="entry name" value="Anticodon-binding domain of a subclass of class I aminoacyl-tRNA synthetases"/>
    <property type="match status" value="1"/>
</dbReference>
<dbReference type="SUPFAM" id="SSF52374">
    <property type="entry name" value="Nucleotidylyl transferase"/>
    <property type="match status" value="1"/>
</dbReference>
<keyword id="KW-0030">Aminoacyl-tRNA synthetase</keyword>
<keyword id="KW-0067">ATP-binding</keyword>
<keyword id="KW-0963">Cytoplasm</keyword>
<keyword id="KW-0436">Ligase</keyword>
<keyword id="KW-0479">Metal-binding</keyword>
<keyword id="KW-0547">Nucleotide-binding</keyword>
<keyword id="KW-0648">Protein biosynthesis</keyword>
<keyword id="KW-1185">Reference proteome</keyword>
<keyword id="KW-0862">Zinc</keyword>
<organism>
    <name type="scientific">Lachnoclostridium phytofermentans (strain ATCC 700394 / DSM 18823 / ISDg)</name>
    <name type="common">Clostridium phytofermentans</name>
    <dbReference type="NCBI Taxonomy" id="357809"/>
    <lineage>
        <taxon>Bacteria</taxon>
        <taxon>Bacillati</taxon>
        <taxon>Bacillota</taxon>
        <taxon>Clostridia</taxon>
        <taxon>Lachnospirales</taxon>
        <taxon>Lachnospiraceae</taxon>
    </lineage>
</organism>
<protein>
    <recommendedName>
        <fullName evidence="1">Cysteine--tRNA ligase</fullName>
        <ecNumber evidence="1">6.1.1.16</ecNumber>
    </recommendedName>
    <alternativeName>
        <fullName evidence="1">Cysteinyl-tRNA synthetase</fullName>
        <shortName evidence="1">CysRS</shortName>
    </alternativeName>
</protein>